<feature type="chain" id="PRO_0000323966" description="Uridylate kinase">
    <location>
        <begin position="1"/>
        <end position="253"/>
    </location>
</feature>
<feature type="binding site" evidence="1">
    <location>
        <begin position="9"/>
        <end position="12"/>
    </location>
    <ligand>
        <name>ATP</name>
        <dbReference type="ChEBI" id="CHEBI:30616"/>
    </ligand>
</feature>
<feature type="binding site" evidence="1">
    <location>
        <position position="51"/>
    </location>
    <ligand>
        <name>UMP</name>
        <dbReference type="ChEBI" id="CHEBI:57865"/>
    </ligand>
</feature>
<feature type="binding site" evidence="1">
    <location>
        <position position="52"/>
    </location>
    <ligand>
        <name>ATP</name>
        <dbReference type="ChEBI" id="CHEBI:30616"/>
    </ligand>
</feature>
<feature type="binding site" evidence="1">
    <location>
        <position position="56"/>
    </location>
    <ligand>
        <name>ATP</name>
        <dbReference type="ChEBI" id="CHEBI:30616"/>
    </ligand>
</feature>
<feature type="binding site" evidence="1">
    <location>
        <position position="72"/>
    </location>
    <ligand>
        <name>UMP</name>
        <dbReference type="ChEBI" id="CHEBI:57865"/>
    </ligand>
</feature>
<feature type="binding site" evidence="1">
    <location>
        <begin position="133"/>
        <end position="140"/>
    </location>
    <ligand>
        <name>UMP</name>
        <dbReference type="ChEBI" id="CHEBI:57865"/>
    </ligand>
</feature>
<feature type="binding site" evidence="1">
    <location>
        <position position="160"/>
    </location>
    <ligand>
        <name>ATP</name>
        <dbReference type="ChEBI" id="CHEBI:30616"/>
    </ligand>
</feature>
<feature type="binding site" evidence="1">
    <location>
        <position position="166"/>
    </location>
    <ligand>
        <name>ATP</name>
        <dbReference type="ChEBI" id="CHEBI:30616"/>
    </ligand>
</feature>
<feature type="binding site" evidence="1">
    <location>
        <position position="169"/>
    </location>
    <ligand>
        <name>ATP</name>
        <dbReference type="ChEBI" id="CHEBI:30616"/>
    </ligand>
</feature>
<name>PYRH_SYNJB</name>
<organism>
    <name type="scientific">Synechococcus sp. (strain JA-2-3B'a(2-13))</name>
    <name type="common">Cyanobacteria bacterium Yellowstone B-Prime</name>
    <dbReference type="NCBI Taxonomy" id="321332"/>
    <lineage>
        <taxon>Bacteria</taxon>
        <taxon>Bacillati</taxon>
        <taxon>Cyanobacteriota</taxon>
        <taxon>Cyanophyceae</taxon>
        <taxon>Synechococcales</taxon>
        <taxon>Synechococcaceae</taxon>
        <taxon>Synechococcus</taxon>
    </lineage>
</organism>
<reference key="1">
    <citation type="journal article" date="2007" name="ISME J.">
        <title>Population level functional diversity in a microbial community revealed by comparative genomic and metagenomic analyses.</title>
        <authorList>
            <person name="Bhaya D."/>
            <person name="Grossman A.R."/>
            <person name="Steunou A.-S."/>
            <person name="Khuri N."/>
            <person name="Cohan F.M."/>
            <person name="Hamamura N."/>
            <person name="Melendrez M.C."/>
            <person name="Bateson M.M."/>
            <person name="Ward D.M."/>
            <person name="Heidelberg J.F."/>
        </authorList>
    </citation>
    <scope>NUCLEOTIDE SEQUENCE [LARGE SCALE GENOMIC DNA]</scope>
    <source>
        <strain>JA-2-3B'a(2-13)</strain>
    </source>
</reference>
<protein>
    <recommendedName>
        <fullName evidence="1">Uridylate kinase</fullName>
        <shortName evidence="1">UK</shortName>
        <ecNumber evidence="1">2.7.4.22</ecNumber>
    </recommendedName>
    <alternativeName>
        <fullName evidence="1">Uridine monophosphate kinase</fullName>
        <shortName evidence="1">UMP kinase</shortName>
        <shortName evidence="1">UMPK</shortName>
    </alternativeName>
</protein>
<proteinExistence type="inferred from homology"/>
<keyword id="KW-0067">ATP-binding</keyword>
<keyword id="KW-0963">Cytoplasm</keyword>
<keyword id="KW-0418">Kinase</keyword>
<keyword id="KW-0547">Nucleotide-binding</keyword>
<keyword id="KW-0665">Pyrimidine biosynthesis</keyword>
<keyword id="KW-1185">Reference proteome</keyword>
<keyword id="KW-0808">Transferase</keyword>
<evidence type="ECO:0000255" key="1">
    <source>
        <dbReference type="HAMAP-Rule" id="MF_01220"/>
    </source>
</evidence>
<gene>
    <name evidence="1" type="primary">pyrH</name>
    <name type="ordered locus">CYB_2292</name>
</gene>
<dbReference type="EC" id="2.7.4.22" evidence="1"/>
<dbReference type="EMBL" id="CP000240">
    <property type="protein sequence ID" value="ABD03232.1"/>
    <property type="molecule type" value="Genomic_DNA"/>
</dbReference>
<dbReference type="RefSeq" id="WP_011433861.1">
    <property type="nucleotide sequence ID" value="NC_007776.1"/>
</dbReference>
<dbReference type="SMR" id="Q2JJE2"/>
<dbReference type="STRING" id="321332.CYB_2292"/>
<dbReference type="KEGG" id="cyb:CYB_2292"/>
<dbReference type="eggNOG" id="COG0528">
    <property type="taxonomic scope" value="Bacteria"/>
</dbReference>
<dbReference type="HOGENOM" id="CLU_033861_0_0_3"/>
<dbReference type="UniPathway" id="UPA00159">
    <property type="reaction ID" value="UER00275"/>
</dbReference>
<dbReference type="Proteomes" id="UP000001938">
    <property type="component" value="Chromosome"/>
</dbReference>
<dbReference type="GO" id="GO:0005737">
    <property type="term" value="C:cytoplasm"/>
    <property type="evidence" value="ECO:0007669"/>
    <property type="project" value="UniProtKB-SubCell"/>
</dbReference>
<dbReference type="GO" id="GO:0005524">
    <property type="term" value="F:ATP binding"/>
    <property type="evidence" value="ECO:0007669"/>
    <property type="project" value="UniProtKB-KW"/>
</dbReference>
<dbReference type="GO" id="GO:0033862">
    <property type="term" value="F:UMP kinase activity"/>
    <property type="evidence" value="ECO:0007669"/>
    <property type="project" value="UniProtKB-EC"/>
</dbReference>
<dbReference type="GO" id="GO:0044210">
    <property type="term" value="P:'de novo' CTP biosynthetic process"/>
    <property type="evidence" value="ECO:0007669"/>
    <property type="project" value="UniProtKB-UniRule"/>
</dbReference>
<dbReference type="GO" id="GO:0006225">
    <property type="term" value="P:UDP biosynthetic process"/>
    <property type="evidence" value="ECO:0007669"/>
    <property type="project" value="TreeGrafter"/>
</dbReference>
<dbReference type="CDD" id="cd04254">
    <property type="entry name" value="AAK_UMPK-PyrH-Ec"/>
    <property type="match status" value="1"/>
</dbReference>
<dbReference type="FunFam" id="3.40.1160.10:FF:000001">
    <property type="entry name" value="Uridylate kinase"/>
    <property type="match status" value="1"/>
</dbReference>
<dbReference type="Gene3D" id="3.40.1160.10">
    <property type="entry name" value="Acetylglutamate kinase-like"/>
    <property type="match status" value="1"/>
</dbReference>
<dbReference type="HAMAP" id="MF_01220_B">
    <property type="entry name" value="PyrH_B"/>
    <property type="match status" value="1"/>
</dbReference>
<dbReference type="InterPro" id="IPR036393">
    <property type="entry name" value="AceGlu_kinase-like_sf"/>
</dbReference>
<dbReference type="InterPro" id="IPR001048">
    <property type="entry name" value="Asp/Glu/Uridylate_kinase"/>
</dbReference>
<dbReference type="InterPro" id="IPR011817">
    <property type="entry name" value="Uridylate_kinase"/>
</dbReference>
<dbReference type="InterPro" id="IPR015963">
    <property type="entry name" value="Uridylate_kinase_bac"/>
</dbReference>
<dbReference type="NCBIfam" id="TIGR02075">
    <property type="entry name" value="pyrH_bact"/>
    <property type="match status" value="1"/>
</dbReference>
<dbReference type="PANTHER" id="PTHR42833">
    <property type="entry name" value="URIDYLATE KINASE"/>
    <property type="match status" value="1"/>
</dbReference>
<dbReference type="PANTHER" id="PTHR42833:SF4">
    <property type="entry name" value="URIDYLATE KINASE PUMPKIN, CHLOROPLASTIC"/>
    <property type="match status" value="1"/>
</dbReference>
<dbReference type="Pfam" id="PF00696">
    <property type="entry name" value="AA_kinase"/>
    <property type="match status" value="1"/>
</dbReference>
<dbReference type="PIRSF" id="PIRSF005650">
    <property type="entry name" value="Uridylate_kin"/>
    <property type="match status" value="1"/>
</dbReference>
<dbReference type="SUPFAM" id="SSF53633">
    <property type="entry name" value="Carbamate kinase-like"/>
    <property type="match status" value="1"/>
</dbReference>
<comment type="function">
    <text evidence="1">Catalyzes the reversible phosphorylation of UMP to UDP.</text>
</comment>
<comment type="catalytic activity">
    <reaction evidence="1">
        <text>UMP + ATP = UDP + ADP</text>
        <dbReference type="Rhea" id="RHEA:24400"/>
        <dbReference type="ChEBI" id="CHEBI:30616"/>
        <dbReference type="ChEBI" id="CHEBI:57865"/>
        <dbReference type="ChEBI" id="CHEBI:58223"/>
        <dbReference type="ChEBI" id="CHEBI:456216"/>
        <dbReference type="EC" id="2.7.4.22"/>
    </reaction>
</comment>
<comment type="activity regulation">
    <text evidence="1">Inhibited by UTP.</text>
</comment>
<comment type="pathway">
    <text evidence="1">Pyrimidine metabolism; CTP biosynthesis via de novo pathway; UDP from UMP (UMPK route): step 1/1.</text>
</comment>
<comment type="subunit">
    <text evidence="1">Homohexamer.</text>
</comment>
<comment type="subcellular location">
    <subcellularLocation>
        <location evidence="1">Cytoplasm</location>
    </subcellularLocation>
</comment>
<comment type="similarity">
    <text evidence="1">Belongs to the UMP kinase family.</text>
</comment>
<accession>Q2JJE2</accession>
<sequence>MKYRRILLKLSGEALMGERPYGIDPEVLKSIAGEVASVVRAGVQVAIVVGGGNIWRGRKEAAAQGMDQASADYVGMLATVINALTLQDAIERAGIPTRVQTAIAMQEVAEPYIRRRAIRHLEKGRVVIFGAGSGNPFFTTDTTAALRAAEIDAEVIFKATKVDGVYDADPKTHPQARRYDVLSYQDVLNRDLRVMDSTAIALCKENQLPIVVFDLTTPGNIYRVVQGEPIGTWIGQRTVENNGIPSPGELIPS</sequence>